<name>KR231_HUMAN</name>
<gene>
    <name type="primary">KRTAP23-1</name>
    <name type="synonym">KAP23.1</name>
</gene>
<evidence type="ECO:0000250" key="1"/>
<reference key="1">
    <citation type="journal article" date="2004" name="Genome Res.">
        <title>The status, quality, and expansion of the NIH full-length cDNA project: the Mammalian Gene Collection (MGC).</title>
        <authorList>
            <consortium name="The MGC Project Team"/>
        </authorList>
    </citation>
    <scope>NUCLEOTIDE SEQUENCE [LARGE SCALE MRNA]</scope>
</reference>
<proteinExistence type="evidence at protein level"/>
<sequence length="65" mass="6892">MSYNCCCGNFSSHSCEGYLCYSGYSRGGSSYPSNLVYSTEPLISQHLPAGFLSLQGLSGDLLGNP</sequence>
<protein>
    <recommendedName>
        <fullName>Keratin-associated protein 23-1</fullName>
    </recommendedName>
</protein>
<dbReference type="EMBL" id="BC128435">
    <property type="protein sequence ID" value="AAI28436.1"/>
    <property type="molecule type" value="mRNA"/>
</dbReference>
<dbReference type="CCDS" id="CCDS33533.1"/>
<dbReference type="RefSeq" id="NP_853655.1">
    <property type="nucleotide sequence ID" value="NM_181624.1"/>
</dbReference>
<dbReference type="BioGRID" id="130646">
    <property type="interactions" value="8"/>
</dbReference>
<dbReference type="FunCoup" id="A1A580">
    <property type="interactions" value="2"/>
</dbReference>
<dbReference type="IntAct" id="A1A580">
    <property type="interactions" value="7"/>
</dbReference>
<dbReference type="STRING" id="9606.ENSP00000346536"/>
<dbReference type="BioMuta" id="KRTAP23-1"/>
<dbReference type="PaxDb" id="9606-ENSP00000346536"/>
<dbReference type="Antibodypedia" id="6613">
    <property type="antibodies" value="44 antibodies from 12 providers"/>
</dbReference>
<dbReference type="DNASU" id="337963"/>
<dbReference type="Ensembl" id="ENST00000334160.6">
    <property type="protein sequence ID" value="ENSP00000346536.3"/>
    <property type="gene ID" value="ENSG00000186980.7"/>
</dbReference>
<dbReference type="GeneID" id="337963"/>
<dbReference type="KEGG" id="hsa:337963"/>
<dbReference type="MANE-Select" id="ENST00000334160.6">
    <property type="protein sequence ID" value="ENSP00000346536.3"/>
    <property type="RefSeq nucleotide sequence ID" value="NM_181624.1"/>
    <property type="RefSeq protein sequence ID" value="NP_853655.1"/>
</dbReference>
<dbReference type="UCSC" id="uc002yny.2">
    <property type="organism name" value="human"/>
</dbReference>
<dbReference type="AGR" id="HGNC:18928"/>
<dbReference type="CTD" id="337963"/>
<dbReference type="GeneCards" id="KRTAP23-1"/>
<dbReference type="HGNC" id="HGNC:18928">
    <property type="gene designation" value="KRTAP23-1"/>
</dbReference>
<dbReference type="HPA" id="ENSG00000186980">
    <property type="expression patterns" value="Not detected"/>
</dbReference>
<dbReference type="neXtProt" id="NX_A1A580"/>
<dbReference type="OpenTargets" id="ENSG00000186980"/>
<dbReference type="PharmGKB" id="PA134978709"/>
<dbReference type="VEuPathDB" id="HostDB:ENSG00000186980"/>
<dbReference type="eggNOG" id="ENOG502TEIG">
    <property type="taxonomic scope" value="Eukaryota"/>
</dbReference>
<dbReference type="GeneTree" id="ENSGT00940000170816"/>
<dbReference type="HOGENOM" id="CLU_2885221_0_0_1"/>
<dbReference type="InParanoid" id="A1A580"/>
<dbReference type="OMA" id="MSYNCCC"/>
<dbReference type="PAN-GO" id="A1A580">
    <property type="GO annotations" value="0 GO annotations based on evolutionary models"/>
</dbReference>
<dbReference type="PhylomeDB" id="A1A580"/>
<dbReference type="TreeFam" id="TF341533"/>
<dbReference type="PathwayCommons" id="A1A580"/>
<dbReference type="Reactome" id="R-HSA-6805567">
    <property type="pathway name" value="Keratinization"/>
</dbReference>
<dbReference type="SignaLink" id="A1A580"/>
<dbReference type="BioGRID-ORCS" id="337963">
    <property type="hits" value="15 hits in 1129 CRISPR screens"/>
</dbReference>
<dbReference type="GenomeRNAi" id="337963"/>
<dbReference type="Pharos" id="A1A580">
    <property type="development level" value="Tdark"/>
</dbReference>
<dbReference type="PRO" id="PR:A1A580"/>
<dbReference type="Proteomes" id="UP000005640">
    <property type="component" value="Chromosome 21"/>
</dbReference>
<dbReference type="RNAct" id="A1A580">
    <property type="molecule type" value="protein"/>
</dbReference>
<dbReference type="Bgee" id="ENSG00000186980">
    <property type="expression patterns" value="Expressed in cell and 23 other cell types or tissues"/>
</dbReference>
<dbReference type="GO" id="GO:0005829">
    <property type="term" value="C:cytosol"/>
    <property type="evidence" value="ECO:0000304"/>
    <property type="project" value="Reactome"/>
</dbReference>
<dbReference type="GO" id="GO:0005882">
    <property type="term" value="C:intermediate filament"/>
    <property type="evidence" value="ECO:0007669"/>
    <property type="project" value="UniProtKB-KW"/>
</dbReference>
<dbReference type="InterPro" id="IPR007951">
    <property type="entry name" value="KRTAP_PMG"/>
</dbReference>
<dbReference type="Pfam" id="PF05287">
    <property type="entry name" value="PMG"/>
    <property type="match status" value="1"/>
</dbReference>
<keyword id="KW-0416">Keratin</keyword>
<keyword id="KW-1185">Reference proteome</keyword>
<keyword id="KW-0677">Repeat</keyword>
<feature type="chain" id="PRO_0000290066" description="Keratin-associated protein 23-1">
    <location>
        <begin position="1"/>
        <end position="65"/>
    </location>
</feature>
<organism>
    <name type="scientific">Homo sapiens</name>
    <name type="common">Human</name>
    <dbReference type="NCBI Taxonomy" id="9606"/>
    <lineage>
        <taxon>Eukaryota</taxon>
        <taxon>Metazoa</taxon>
        <taxon>Chordata</taxon>
        <taxon>Craniata</taxon>
        <taxon>Vertebrata</taxon>
        <taxon>Euteleostomi</taxon>
        <taxon>Mammalia</taxon>
        <taxon>Eutheria</taxon>
        <taxon>Euarchontoglires</taxon>
        <taxon>Primates</taxon>
        <taxon>Haplorrhini</taxon>
        <taxon>Catarrhini</taxon>
        <taxon>Hominidae</taxon>
        <taxon>Homo</taxon>
    </lineage>
</organism>
<comment type="function">
    <text>In the hair cortex, hair keratin intermediate filaments are embedded in an interfilamentous matrix, consisting of hair keratin-associated proteins (KRTAP), which are essential for the formation of a rigid and resistant hair shaft through their extensive disulfide bond cross-linking with abundant cysteine residues of hair keratins. The matrix proteins include the high-sulfur and high-glycine-tyrosine keratins.</text>
</comment>
<comment type="subunit">
    <text evidence="1">Interacts with hair keratins.</text>
</comment>
<comment type="interaction">
    <interactant intactId="EBI-10171734">
        <id>A1A580</id>
    </interactant>
    <interactant intactId="EBI-11976299">
        <id>Q5BKX5-3</id>
        <label>ACTMAP</label>
    </interactant>
    <organismsDiffer>false</organismsDiffer>
    <experiments>3</experiments>
</comment>
<comment type="interaction">
    <interactant intactId="EBI-10171734">
        <id>A1A580</id>
    </interactant>
    <interactant intactId="EBI-711810">
        <id>O14503</id>
        <label>BHLHE40</label>
    </interactant>
    <organismsDiffer>false</organismsDiffer>
    <experiments>3</experiments>
</comment>
<comment type="interaction">
    <interactant intactId="EBI-10171734">
        <id>A1A580</id>
    </interactant>
    <interactant intactId="EBI-1383687">
        <id>Q9UQM7</id>
        <label>CAMK2A</label>
    </interactant>
    <organismsDiffer>false</organismsDiffer>
    <experiments>3</experiments>
</comment>
<comment type="interaction">
    <interactant intactId="EBI-10171734">
        <id>A1A580</id>
    </interactant>
    <interactant intactId="EBI-740785">
        <id>P49639</id>
        <label>HOXA1</label>
    </interactant>
    <organismsDiffer>false</organismsDiffer>
    <experiments>3</experiments>
</comment>
<comment type="interaction">
    <interactant intactId="EBI-10171734">
        <id>A1A580</id>
    </interactant>
    <interactant intactId="EBI-740322">
        <id>Q93062</id>
        <label>RBPMS</label>
    </interactant>
    <organismsDiffer>false</organismsDiffer>
    <experiments>3</experiments>
</comment>
<comment type="interaction">
    <interactant intactId="EBI-10171734">
        <id>A1A580</id>
    </interactant>
    <interactant intactId="EBI-743976">
        <id>Q96LM6</id>
        <label>SPMIP9</label>
    </interactant>
    <organismsDiffer>false</organismsDiffer>
    <experiments>3</experiments>
</comment>
<accession>A1A580</accession>